<protein>
    <recommendedName>
        <fullName evidence="1">Large ribosomal subunit protein bL25</fullName>
    </recommendedName>
    <alternativeName>
        <fullName evidence="2">50S ribosomal protein L25</fullName>
    </alternativeName>
</protein>
<dbReference type="EMBL" id="CP000901">
    <property type="protein sequence ID" value="ABX85383.1"/>
    <property type="molecule type" value="Genomic_DNA"/>
</dbReference>
<dbReference type="RefSeq" id="WP_002208834.1">
    <property type="nucleotide sequence ID" value="NZ_CP009935.1"/>
</dbReference>
<dbReference type="SMR" id="A9R3I4"/>
<dbReference type="GeneID" id="96664865"/>
<dbReference type="KEGG" id="ypg:YpAngola_A1488"/>
<dbReference type="PATRIC" id="fig|349746.12.peg.2454"/>
<dbReference type="GO" id="GO:0022625">
    <property type="term" value="C:cytosolic large ribosomal subunit"/>
    <property type="evidence" value="ECO:0007669"/>
    <property type="project" value="TreeGrafter"/>
</dbReference>
<dbReference type="GO" id="GO:0008097">
    <property type="term" value="F:5S rRNA binding"/>
    <property type="evidence" value="ECO:0007669"/>
    <property type="project" value="InterPro"/>
</dbReference>
<dbReference type="GO" id="GO:0003735">
    <property type="term" value="F:structural constituent of ribosome"/>
    <property type="evidence" value="ECO:0007669"/>
    <property type="project" value="InterPro"/>
</dbReference>
<dbReference type="GO" id="GO:0006412">
    <property type="term" value="P:translation"/>
    <property type="evidence" value="ECO:0007669"/>
    <property type="project" value="UniProtKB-UniRule"/>
</dbReference>
<dbReference type="CDD" id="cd00495">
    <property type="entry name" value="Ribosomal_L25_TL5_CTC"/>
    <property type="match status" value="1"/>
</dbReference>
<dbReference type="FunFam" id="2.40.240.10:FF:000002">
    <property type="entry name" value="50S ribosomal protein L25"/>
    <property type="match status" value="1"/>
</dbReference>
<dbReference type="Gene3D" id="2.40.240.10">
    <property type="entry name" value="Ribosomal Protein L25, Chain P"/>
    <property type="match status" value="1"/>
</dbReference>
<dbReference type="HAMAP" id="MF_01336">
    <property type="entry name" value="Ribosomal_bL25"/>
    <property type="match status" value="1"/>
</dbReference>
<dbReference type="InterPro" id="IPR020056">
    <property type="entry name" value="Rbsml_bL25/Gln-tRNA_synth_N"/>
</dbReference>
<dbReference type="InterPro" id="IPR011035">
    <property type="entry name" value="Ribosomal_bL25/Gln-tRNA_synth"/>
</dbReference>
<dbReference type="InterPro" id="IPR020055">
    <property type="entry name" value="Ribosomal_bL25_short"/>
</dbReference>
<dbReference type="InterPro" id="IPR029751">
    <property type="entry name" value="Ribosomal_L25_dom"/>
</dbReference>
<dbReference type="InterPro" id="IPR020930">
    <property type="entry name" value="Ribosomal_uL5_bac-type"/>
</dbReference>
<dbReference type="NCBIfam" id="NF004612">
    <property type="entry name" value="PRK05943.1"/>
    <property type="match status" value="1"/>
</dbReference>
<dbReference type="PANTHER" id="PTHR33284">
    <property type="entry name" value="RIBOSOMAL PROTEIN L25/GLN-TRNA SYNTHETASE, ANTI-CODON-BINDING DOMAIN-CONTAINING PROTEIN"/>
    <property type="match status" value="1"/>
</dbReference>
<dbReference type="PANTHER" id="PTHR33284:SF1">
    <property type="entry name" value="RIBOSOMAL PROTEIN L25_GLN-TRNA SYNTHETASE, ANTI-CODON-BINDING DOMAIN-CONTAINING PROTEIN"/>
    <property type="match status" value="1"/>
</dbReference>
<dbReference type="Pfam" id="PF01386">
    <property type="entry name" value="Ribosomal_L25p"/>
    <property type="match status" value="1"/>
</dbReference>
<dbReference type="SUPFAM" id="SSF50715">
    <property type="entry name" value="Ribosomal protein L25-like"/>
    <property type="match status" value="1"/>
</dbReference>
<gene>
    <name evidence="1" type="primary">rplY</name>
    <name type="ordered locus">YpAngola_A1488</name>
</gene>
<accession>A9R3I4</accession>
<organism>
    <name type="scientific">Yersinia pestis bv. Antiqua (strain Angola)</name>
    <dbReference type="NCBI Taxonomy" id="349746"/>
    <lineage>
        <taxon>Bacteria</taxon>
        <taxon>Pseudomonadati</taxon>
        <taxon>Pseudomonadota</taxon>
        <taxon>Gammaproteobacteria</taxon>
        <taxon>Enterobacterales</taxon>
        <taxon>Yersiniaceae</taxon>
        <taxon>Yersinia</taxon>
    </lineage>
</organism>
<evidence type="ECO:0000255" key="1">
    <source>
        <dbReference type="HAMAP-Rule" id="MF_01336"/>
    </source>
</evidence>
<evidence type="ECO:0000305" key="2"/>
<feature type="chain" id="PRO_1000142602" description="Large ribosomal subunit protein bL25">
    <location>
        <begin position="1"/>
        <end position="94"/>
    </location>
</feature>
<reference key="1">
    <citation type="journal article" date="2010" name="J. Bacteriol.">
        <title>Genome sequence of the deep-rooted Yersinia pestis strain Angola reveals new insights into the evolution and pangenome of the plague bacterium.</title>
        <authorList>
            <person name="Eppinger M."/>
            <person name="Worsham P.L."/>
            <person name="Nikolich M.P."/>
            <person name="Riley D.R."/>
            <person name="Sebastian Y."/>
            <person name="Mou S."/>
            <person name="Achtman M."/>
            <person name="Lindler L.E."/>
            <person name="Ravel J."/>
        </authorList>
    </citation>
    <scope>NUCLEOTIDE SEQUENCE [LARGE SCALE GENOMIC DNA]</scope>
    <source>
        <strain>Angola</strain>
    </source>
</reference>
<comment type="function">
    <text evidence="1">This is one of the proteins that binds to the 5S RNA in the ribosome where it forms part of the central protuberance.</text>
</comment>
<comment type="subunit">
    <text evidence="1">Part of the 50S ribosomal subunit; part of the 5S rRNA/L5/L18/L25 subcomplex. Contacts the 5S rRNA. Binds to the 5S rRNA independently of L5 and L18.</text>
</comment>
<comment type="similarity">
    <text evidence="1">Belongs to the bacterial ribosomal protein bL25 family.</text>
</comment>
<keyword id="KW-0687">Ribonucleoprotein</keyword>
<keyword id="KW-0689">Ribosomal protein</keyword>
<keyword id="KW-0694">RNA-binding</keyword>
<keyword id="KW-0699">rRNA-binding</keyword>
<name>RL25_YERPG</name>
<sequence length="94" mass="10406">MTTINVEVRNDQGKGASRRLRAANKFPAIVYGGSEAAISIALDHDTTKNLELKPGFYDSVLTLVIDGKETKVKVQAVQRHAFKPKLTHIDFVRV</sequence>
<proteinExistence type="inferred from homology"/>